<proteinExistence type="inferred from homology"/>
<keyword id="KW-0093">Biotin biosynthesis</keyword>
<keyword id="KW-0963">Cytoplasm</keyword>
<keyword id="KW-0378">Hydrolase</keyword>
<keyword id="KW-0719">Serine esterase</keyword>
<dbReference type="EC" id="3.1.1.85" evidence="2"/>
<dbReference type="EMBL" id="CP000948">
    <property type="protein sequence ID" value="ACB04470.1"/>
    <property type="molecule type" value="Genomic_DNA"/>
</dbReference>
<dbReference type="RefSeq" id="WP_001060070.1">
    <property type="nucleotide sequence ID" value="NC_010473.1"/>
</dbReference>
<dbReference type="SMR" id="B1X758"/>
<dbReference type="ESTHER" id="ecoli-bioh">
    <property type="family name" value="BioH"/>
</dbReference>
<dbReference type="MEROPS" id="S33.994"/>
<dbReference type="KEGG" id="ecd:ECDH10B_3587"/>
<dbReference type="HOGENOM" id="CLU_020336_12_2_6"/>
<dbReference type="UniPathway" id="UPA00078"/>
<dbReference type="GO" id="GO:0005737">
    <property type="term" value="C:cytoplasm"/>
    <property type="evidence" value="ECO:0007669"/>
    <property type="project" value="UniProtKB-SubCell"/>
</dbReference>
<dbReference type="GO" id="GO:0090499">
    <property type="term" value="F:pimelyl-[acyl-carrier protein] methyl ester esterase activity"/>
    <property type="evidence" value="ECO:0007669"/>
    <property type="project" value="UniProtKB-EC"/>
</dbReference>
<dbReference type="GO" id="GO:0009102">
    <property type="term" value="P:biotin biosynthetic process"/>
    <property type="evidence" value="ECO:0007669"/>
    <property type="project" value="UniProtKB-UniRule"/>
</dbReference>
<dbReference type="FunFam" id="3.40.50.1820:FF:000045">
    <property type="entry name" value="Pimeloyl-[acyl-carrier protein] methyl ester esterase"/>
    <property type="match status" value="1"/>
</dbReference>
<dbReference type="Gene3D" id="3.40.50.1820">
    <property type="entry name" value="alpha/beta hydrolase"/>
    <property type="match status" value="1"/>
</dbReference>
<dbReference type="HAMAP" id="MF_01260">
    <property type="entry name" value="Carboxylester"/>
    <property type="match status" value="1"/>
</dbReference>
<dbReference type="InterPro" id="IPR000073">
    <property type="entry name" value="AB_hydrolase_1"/>
</dbReference>
<dbReference type="InterPro" id="IPR029058">
    <property type="entry name" value="AB_hydrolase_fold"/>
</dbReference>
<dbReference type="InterPro" id="IPR010076">
    <property type="entry name" value="BioH"/>
</dbReference>
<dbReference type="InterPro" id="IPR050228">
    <property type="entry name" value="Carboxylesterase_BioH"/>
</dbReference>
<dbReference type="NCBIfam" id="TIGR01738">
    <property type="entry name" value="bioH"/>
    <property type="match status" value="1"/>
</dbReference>
<dbReference type="NCBIfam" id="NF007674">
    <property type="entry name" value="PRK10349.1"/>
    <property type="match status" value="1"/>
</dbReference>
<dbReference type="PANTHER" id="PTHR43194">
    <property type="entry name" value="HYDROLASE ALPHA/BETA FOLD FAMILY"/>
    <property type="match status" value="1"/>
</dbReference>
<dbReference type="PANTHER" id="PTHR43194:SF5">
    <property type="entry name" value="PIMELOYL-[ACYL-CARRIER PROTEIN] METHYL ESTER ESTERASE"/>
    <property type="match status" value="1"/>
</dbReference>
<dbReference type="Pfam" id="PF00561">
    <property type="entry name" value="Abhydrolase_1"/>
    <property type="match status" value="1"/>
</dbReference>
<dbReference type="SUPFAM" id="SSF53474">
    <property type="entry name" value="alpha/beta-Hydrolases"/>
    <property type="match status" value="1"/>
</dbReference>
<sequence>MNNIWWQTKGQGNVHLVLLHGWGLNAEVWRCIDEELSSHFTLHLVDLPGFGRSRGFGALSLADMAEAVLQQAPDKAIWLGWSLGGLVASQIALTHPERVQALVTVASSPCFSARDEWPGIKPDVLAGFQQQLSDDFQRTVERFLALQTMGTETARQDARALKKTVLALPMPEVDVLNGGLEILKTVDLRQPLQNVSMPFLRLYGYLDGLVPRKVVPMLDKLWPHSESYIFAKAAHAPFISHPAEFCHLLVALKQRV</sequence>
<evidence type="ECO:0000255" key="1"/>
<evidence type="ECO:0000255" key="2">
    <source>
        <dbReference type="HAMAP-Rule" id="MF_01260"/>
    </source>
</evidence>
<reference key="1">
    <citation type="journal article" date="2008" name="J. Bacteriol.">
        <title>The complete genome sequence of Escherichia coli DH10B: insights into the biology of a laboratory workhorse.</title>
        <authorList>
            <person name="Durfee T."/>
            <person name="Nelson R."/>
            <person name="Baldwin S."/>
            <person name="Plunkett G. III"/>
            <person name="Burland V."/>
            <person name="Mau B."/>
            <person name="Petrosino J.F."/>
            <person name="Qin X."/>
            <person name="Muzny D.M."/>
            <person name="Ayele M."/>
            <person name="Gibbs R.A."/>
            <person name="Csorgo B."/>
            <person name="Posfai G."/>
            <person name="Weinstock G.M."/>
            <person name="Blattner F.R."/>
        </authorList>
    </citation>
    <scope>NUCLEOTIDE SEQUENCE [LARGE SCALE GENOMIC DNA]</scope>
    <source>
        <strain>K12 / DH10B</strain>
    </source>
</reference>
<feature type="chain" id="PRO_1000139990" description="Pimeloyl-[acyl-carrier protein] methyl ester esterase">
    <location>
        <begin position="1"/>
        <end position="256"/>
    </location>
</feature>
<feature type="domain" description="AB hydrolase-1" evidence="1">
    <location>
        <begin position="15"/>
        <end position="242"/>
    </location>
</feature>
<feature type="active site" description="Nucleophile" evidence="2">
    <location>
        <position position="82"/>
    </location>
</feature>
<feature type="active site" evidence="2">
    <location>
        <position position="207"/>
    </location>
</feature>
<feature type="active site" evidence="2">
    <location>
        <position position="235"/>
    </location>
</feature>
<feature type="binding site" evidence="2">
    <location>
        <position position="22"/>
    </location>
    <ligand>
        <name>substrate</name>
    </ligand>
</feature>
<feature type="binding site" evidence="2">
    <location>
        <begin position="82"/>
        <end position="83"/>
    </location>
    <ligand>
        <name>substrate</name>
    </ligand>
</feature>
<feature type="binding site" evidence="2">
    <location>
        <begin position="143"/>
        <end position="147"/>
    </location>
    <ligand>
        <name>substrate</name>
    </ligand>
</feature>
<feature type="binding site" evidence="2">
    <location>
        <position position="235"/>
    </location>
    <ligand>
        <name>substrate</name>
    </ligand>
</feature>
<comment type="function">
    <text evidence="2">The physiological role of BioH is to remove the methyl group introduced by BioC when the pimeloyl moiety is complete. It allows to synthesize pimeloyl-ACP via the fatty acid synthetic pathway through the hydrolysis of the ester bonds of pimeloyl-ACP esters.</text>
</comment>
<comment type="catalytic activity">
    <reaction evidence="2">
        <text>6-carboxyhexanoyl-[ACP] methyl ester + H2O = 6-carboxyhexanoyl-[ACP] + methanol + H(+)</text>
        <dbReference type="Rhea" id="RHEA:42700"/>
        <dbReference type="Rhea" id="RHEA-COMP:9955"/>
        <dbReference type="Rhea" id="RHEA-COMP:10186"/>
        <dbReference type="ChEBI" id="CHEBI:15377"/>
        <dbReference type="ChEBI" id="CHEBI:15378"/>
        <dbReference type="ChEBI" id="CHEBI:17790"/>
        <dbReference type="ChEBI" id="CHEBI:78846"/>
        <dbReference type="ChEBI" id="CHEBI:82735"/>
        <dbReference type="EC" id="3.1.1.85"/>
    </reaction>
</comment>
<comment type="pathway">
    <text evidence="2">Cofactor biosynthesis; biotin biosynthesis.</text>
</comment>
<comment type="subunit">
    <text evidence="2">Monomer.</text>
</comment>
<comment type="subcellular location">
    <subcellularLocation>
        <location evidence="2">Cytoplasm</location>
    </subcellularLocation>
</comment>
<comment type="similarity">
    <text evidence="2">Belongs to the AB hydrolase superfamily. Carboxylesterase BioH family.</text>
</comment>
<name>BIOH_ECODH</name>
<protein>
    <recommendedName>
        <fullName evidence="2">Pimeloyl-[acyl-carrier protein] methyl ester esterase</fullName>
        <ecNumber evidence="2">3.1.1.85</ecNumber>
    </recommendedName>
    <alternativeName>
        <fullName evidence="2">Biotin synthesis protein BioH</fullName>
    </alternativeName>
    <alternativeName>
        <fullName evidence="2">Carboxylesterase BioH</fullName>
    </alternativeName>
</protein>
<accession>B1X758</accession>
<organism>
    <name type="scientific">Escherichia coli (strain K12 / DH10B)</name>
    <dbReference type="NCBI Taxonomy" id="316385"/>
    <lineage>
        <taxon>Bacteria</taxon>
        <taxon>Pseudomonadati</taxon>
        <taxon>Pseudomonadota</taxon>
        <taxon>Gammaproteobacteria</taxon>
        <taxon>Enterobacterales</taxon>
        <taxon>Enterobacteriaceae</taxon>
        <taxon>Escherichia</taxon>
    </lineage>
</organism>
<gene>
    <name evidence="2" type="primary">bioH</name>
    <name type="ordered locus">ECDH10B_3587</name>
</gene>